<keyword id="KW-0050">Antiport</keyword>
<keyword id="KW-0997">Cell inner membrane</keyword>
<keyword id="KW-1003">Cell membrane</keyword>
<keyword id="KW-0406">Ion transport</keyword>
<keyword id="KW-0472">Membrane</keyword>
<keyword id="KW-0915">Sodium</keyword>
<keyword id="KW-0739">Sodium transport</keyword>
<keyword id="KW-0812">Transmembrane</keyword>
<keyword id="KW-1133">Transmembrane helix</keyword>
<keyword id="KW-0813">Transport</keyword>
<sequence>MKHLHRFFSSDASGGIILIIAAILAMIMANSGATSGWYHDFLETPVQLRVGSLEINKNMLLWINDALMAVFFLLVGLEVKRELMQGSLASLLQAAFPVIAAIGGMIVPALLYLAFNYADPITREGWAIPAATDIAFALGVLALLGSRVPLVLKIFLMALAIIDDLGAIIIIALFYTNDLSMASLGVAAVAIAVLAVLNLCGVRRTGVYILVGVVLWTAVLKSGVHATLAGVIVGFFIPLKEKHGRSPAKRLEHVLHPWVAYLILPLFAFANAGVSLQGVTLDGLTSILPLGIIAGLLIGKPLGISLFCWLALRLKLAHLPEGTTYQQIMVVGILCGIGFTMSIFIASLAFGSVDPELINWAKLGILVGSISSAVIGYSWLRVRLRPSV</sequence>
<reference key="1">
    <citation type="journal article" date="2006" name="BMC Genomics">
        <title>Complete genome sequence of Shigella flexneri 5b and comparison with Shigella flexneri 2a.</title>
        <authorList>
            <person name="Nie H."/>
            <person name="Yang F."/>
            <person name="Zhang X."/>
            <person name="Yang J."/>
            <person name="Chen L."/>
            <person name="Wang J."/>
            <person name="Xiong Z."/>
            <person name="Peng J."/>
            <person name="Sun L."/>
            <person name="Dong J."/>
            <person name="Xue Y."/>
            <person name="Xu X."/>
            <person name="Chen S."/>
            <person name="Yao Z."/>
            <person name="Shen Y."/>
            <person name="Jin Q."/>
        </authorList>
    </citation>
    <scope>NUCLEOTIDE SEQUENCE [LARGE SCALE GENOMIC DNA]</scope>
    <source>
        <strain>8401</strain>
    </source>
</reference>
<organism>
    <name type="scientific">Shigella flexneri serotype 5b (strain 8401)</name>
    <dbReference type="NCBI Taxonomy" id="373384"/>
    <lineage>
        <taxon>Bacteria</taxon>
        <taxon>Pseudomonadati</taxon>
        <taxon>Pseudomonadota</taxon>
        <taxon>Gammaproteobacteria</taxon>
        <taxon>Enterobacterales</taxon>
        <taxon>Enterobacteriaceae</taxon>
        <taxon>Shigella</taxon>
    </lineage>
</organism>
<name>NHAA_SHIF8</name>
<feature type="chain" id="PRO_0000334438" description="Na(+)/H(+) antiporter NhaA">
    <location>
        <begin position="1"/>
        <end position="388"/>
    </location>
</feature>
<feature type="topological domain" description="Cytoplasmic" evidence="1">
    <location>
        <begin position="1"/>
        <end position="11"/>
    </location>
</feature>
<feature type="transmembrane region" description="Helical; Name=1" evidence="1">
    <location>
        <begin position="12"/>
        <end position="31"/>
    </location>
</feature>
<feature type="topological domain" description="Periplasmic" evidence="1">
    <location>
        <begin position="32"/>
        <end position="58"/>
    </location>
</feature>
<feature type="transmembrane region" description="Helical; Name=2" evidence="1">
    <location>
        <begin position="59"/>
        <end position="80"/>
    </location>
</feature>
<feature type="topological domain" description="Cytoplasmic" evidence="1">
    <location>
        <begin position="81"/>
        <end position="96"/>
    </location>
</feature>
<feature type="transmembrane region" description="Helical; Name=3" evidence="1">
    <location>
        <begin position="97"/>
        <end position="116"/>
    </location>
</feature>
<feature type="topological domain" description="Periplasmic" evidence="1">
    <location>
        <begin position="117"/>
        <end position="122"/>
    </location>
</feature>
<feature type="transmembrane region" description="Helical; Name=4" evidence="1">
    <location>
        <begin position="123"/>
        <end position="130"/>
    </location>
</feature>
<feature type="topological domain" description="Cytoplasmic" evidence="1">
    <location>
        <begin position="131"/>
        <end position="154"/>
    </location>
</feature>
<feature type="transmembrane region" description="Helical; Name=5" evidence="1">
    <location>
        <begin position="155"/>
        <end position="176"/>
    </location>
</feature>
<feature type="topological domain" description="Periplasmic" evidence="1">
    <location>
        <begin position="177"/>
        <end position="180"/>
    </location>
</feature>
<feature type="transmembrane region" description="Helical; Name=6" evidence="1">
    <location>
        <begin position="181"/>
        <end position="200"/>
    </location>
</feature>
<feature type="topological domain" description="Cytoplasmic" evidence="1">
    <location>
        <begin position="201"/>
        <end position="204"/>
    </location>
</feature>
<feature type="transmembrane region" description="Helical; Name=7" evidence="1">
    <location>
        <begin position="205"/>
        <end position="222"/>
    </location>
</feature>
<feature type="topological domain" description="Periplasmic" evidence="1">
    <location>
        <position position="223"/>
    </location>
</feature>
<feature type="transmembrane region" description="Helical; Name=8" evidence="1">
    <location>
        <begin position="224"/>
        <end position="236"/>
    </location>
</feature>
<feature type="topological domain" description="Cytoplasmic" evidence="1">
    <location>
        <begin position="237"/>
        <end position="253"/>
    </location>
</feature>
<feature type="transmembrane region" description="Helical; Name=9" evidence="1">
    <location>
        <begin position="254"/>
        <end position="272"/>
    </location>
</feature>
<feature type="topological domain" description="Periplasmic" evidence="1">
    <location>
        <begin position="273"/>
        <end position="286"/>
    </location>
</feature>
<feature type="transmembrane region" description="Helical; Name=10" evidence="1">
    <location>
        <begin position="287"/>
        <end position="310"/>
    </location>
</feature>
<feature type="topological domain" description="Cytoplasmic" evidence="1">
    <location>
        <begin position="311"/>
        <end position="339"/>
    </location>
</feature>
<feature type="transmembrane region" description="Helical; Name=11" evidence="1">
    <location>
        <begin position="340"/>
        <end position="350"/>
    </location>
</feature>
<feature type="topological domain" description="Periplasmic" evidence="1">
    <location>
        <begin position="351"/>
        <end position="357"/>
    </location>
</feature>
<feature type="transmembrane region" description="Helical; Name=12" evidence="1">
    <location>
        <begin position="358"/>
        <end position="380"/>
    </location>
</feature>
<feature type="topological domain" description="Cytoplasmic" evidence="1">
    <location>
        <begin position="381"/>
        <end position="388"/>
    </location>
</feature>
<protein>
    <recommendedName>
        <fullName evidence="1">Na(+)/H(+) antiporter NhaA</fullName>
    </recommendedName>
    <alternativeName>
        <fullName evidence="1">Sodium/proton antiporter NhaA</fullName>
    </alternativeName>
</protein>
<dbReference type="EMBL" id="CP000266">
    <property type="protein sequence ID" value="ABF02302.1"/>
    <property type="molecule type" value="Genomic_DNA"/>
</dbReference>
<dbReference type="RefSeq" id="WP_000681350.1">
    <property type="nucleotide sequence ID" value="NC_008258.1"/>
</dbReference>
<dbReference type="SMR" id="Q0T8H4"/>
<dbReference type="KEGG" id="sfv:SFV_0014"/>
<dbReference type="HOGENOM" id="CLU_015803_1_0_6"/>
<dbReference type="Proteomes" id="UP000000659">
    <property type="component" value="Chromosome"/>
</dbReference>
<dbReference type="GO" id="GO:0005886">
    <property type="term" value="C:plasma membrane"/>
    <property type="evidence" value="ECO:0007669"/>
    <property type="project" value="UniProtKB-SubCell"/>
</dbReference>
<dbReference type="GO" id="GO:0015385">
    <property type="term" value="F:sodium:proton antiporter activity"/>
    <property type="evidence" value="ECO:0007669"/>
    <property type="project" value="TreeGrafter"/>
</dbReference>
<dbReference type="GO" id="GO:0006885">
    <property type="term" value="P:regulation of pH"/>
    <property type="evidence" value="ECO:0007669"/>
    <property type="project" value="InterPro"/>
</dbReference>
<dbReference type="FunFam" id="1.20.1530.10:FF:000001">
    <property type="entry name" value="Na(+)/H(+) antiporter NhaA"/>
    <property type="match status" value="1"/>
</dbReference>
<dbReference type="Gene3D" id="1.20.1530.10">
    <property type="entry name" value="Na+/H+ antiporter like domain"/>
    <property type="match status" value="1"/>
</dbReference>
<dbReference type="HAMAP" id="MF_01844">
    <property type="entry name" value="NhaA"/>
    <property type="match status" value="1"/>
</dbReference>
<dbReference type="InterPro" id="IPR023171">
    <property type="entry name" value="Na/H_antiporter_dom_sf"/>
</dbReference>
<dbReference type="InterPro" id="IPR004670">
    <property type="entry name" value="NhaA"/>
</dbReference>
<dbReference type="NCBIfam" id="TIGR00773">
    <property type="entry name" value="NhaA"/>
    <property type="match status" value="1"/>
</dbReference>
<dbReference type="NCBIfam" id="NF007111">
    <property type="entry name" value="PRK09560.1"/>
    <property type="match status" value="1"/>
</dbReference>
<dbReference type="NCBIfam" id="NF007112">
    <property type="entry name" value="PRK09561.1"/>
    <property type="match status" value="1"/>
</dbReference>
<dbReference type="PANTHER" id="PTHR30341:SF0">
    <property type="entry name" value="NA(+)_H(+) ANTIPORTER NHAA"/>
    <property type="match status" value="1"/>
</dbReference>
<dbReference type="PANTHER" id="PTHR30341">
    <property type="entry name" value="SODIUM ION/PROTON ANTIPORTER NHAA-RELATED"/>
    <property type="match status" value="1"/>
</dbReference>
<dbReference type="Pfam" id="PF06965">
    <property type="entry name" value="Na_H_antiport_1"/>
    <property type="match status" value="1"/>
</dbReference>
<accession>Q0T8H4</accession>
<proteinExistence type="inferred from homology"/>
<comment type="function">
    <text evidence="1">Na(+)/H(+) antiporter that extrudes sodium in exchange for external protons.</text>
</comment>
<comment type="catalytic activity">
    <reaction evidence="1">
        <text>Na(+)(in) + 2 H(+)(out) = Na(+)(out) + 2 H(+)(in)</text>
        <dbReference type="Rhea" id="RHEA:29251"/>
        <dbReference type="ChEBI" id="CHEBI:15378"/>
        <dbReference type="ChEBI" id="CHEBI:29101"/>
    </reaction>
    <physiologicalReaction direction="left-to-right" evidence="1">
        <dbReference type="Rhea" id="RHEA:29252"/>
    </physiologicalReaction>
</comment>
<comment type="subcellular location">
    <subcellularLocation>
        <location evidence="1">Cell inner membrane</location>
        <topology evidence="1">Multi-pass membrane protein</topology>
    </subcellularLocation>
</comment>
<comment type="similarity">
    <text evidence="1">Belongs to the NhaA Na(+)/H(+) (TC 2.A.33) antiporter family.</text>
</comment>
<evidence type="ECO:0000255" key="1">
    <source>
        <dbReference type="HAMAP-Rule" id="MF_01844"/>
    </source>
</evidence>
<gene>
    <name evidence="1" type="primary">nhaA</name>
    <name type="ordered locus">SFV_0014</name>
</gene>